<proteinExistence type="inferred from homology"/>
<comment type="function">
    <text evidence="1">Catalyzes the attachment of proline to tRNA(Pro) in a two-step reaction: proline is first activated by ATP to form Pro-AMP and then transferred to the acceptor end of tRNA(Pro). As ProRS can inadvertently accommodate and process non-cognate amino acids such as alanine and cysteine, to avoid such errors it has two additional distinct editing activities against alanine. One activity is designated as 'pretransfer' editing and involves the tRNA(Pro)-independent hydrolysis of activated Ala-AMP. The other activity is designated 'posttransfer' editing and involves deacylation of mischarged Ala-tRNA(Pro). The misacylated Cys-tRNA(Pro) is not edited by ProRS.</text>
</comment>
<comment type="catalytic activity">
    <reaction evidence="1">
        <text>tRNA(Pro) + L-proline + ATP = L-prolyl-tRNA(Pro) + AMP + diphosphate</text>
        <dbReference type="Rhea" id="RHEA:14305"/>
        <dbReference type="Rhea" id="RHEA-COMP:9700"/>
        <dbReference type="Rhea" id="RHEA-COMP:9702"/>
        <dbReference type="ChEBI" id="CHEBI:30616"/>
        <dbReference type="ChEBI" id="CHEBI:33019"/>
        <dbReference type="ChEBI" id="CHEBI:60039"/>
        <dbReference type="ChEBI" id="CHEBI:78442"/>
        <dbReference type="ChEBI" id="CHEBI:78532"/>
        <dbReference type="ChEBI" id="CHEBI:456215"/>
        <dbReference type="EC" id="6.1.1.15"/>
    </reaction>
</comment>
<comment type="subunit">
    <text evidence="1">Homodimer.</text>
</comment>
<comment type="subcellular location">
    <subcellularLocation>
        <location evidence="1">Cytoplasm</location>
    </subcellularLocation>
</comment>
<comment type="domain">
    <text evidence="1">Consists of three domains: the N-terminal catalytic domain, the editing domain and the C-terminal anticodon-binding domain.</text>
</comment>
<comment type="similarity">
    <text evidence="1">Belongs to the class-II aminoacyl-tRNA synthetase family. ProS type 1 subfamily.</text>
</comment>
<gene>
    <name evidence="1" type="primary">proS</name>
    <name type="ordered locus">YPTS_3098</name>
</gene>
<organism>
    <name type="scientific">Yersinia pseudotuberculosis serotype IB (strain PB1/+)</name>
    <dbReference type="NCBI Taxonomy" id="502801"/>
    <lineage>
        <taxon>Bacteria</taxon>
        <taxon>Pseudomonadati</taxon>
        <taxon>Pseudomonadota</taxon>
        <taxon>Gammaproteobacteria</taxon>
        <taxon>Enterobacterales</taxon>
        <taxon>Yersiniaceae</taxon>
        <taxon>Yersinia</taxon>
    </lineage>
</organism>
<dbReference type="EC" id="6.1.1.15" evidence="1"/>
<dbReference type="EMBL" id="CP001048">
    <property type="protein sequence ID" value="ACC90053.1"/>
    <property type="molecule type" value="Genomic_DNA"/>
</dbReference>
<dbReference type="RefSeq" id="WP_011192856.1">
    <property type="nucleotide sequence ID" value="NZ_CP009780.1"/>
</dbReference>
<dbReference type="SMR" id="B2JZ09"/>
<dbReference type="KEGG" id="ypb:YPTS_3098"/>
<dbReference type="PATRIC" id="fig|502801.10.peg.2530"/>
<dbReference type="GO" id="GO:0005829">
    <property type="term" value="C:cytosol"/>
    <property type="evidence" value="ECO:0007669"/>
    <property type="project" value="TreeGrafter"/>
</dbReference>
<dbReference type="GO" id="GO:0002161">
    <property type="term" value="F:aminoacyl-tRNA deacylase activity"/>
    <property type="evidence" value="ECO:0007669"/>
    <property type="project" value="InterPro"/>
</dbReference>
<dbReference type="GO" id="GO:0005524">
    <property type="term" value="F:ATP binding"/>
    <property type="evidence" value="ECO:0007669"/>
    <property type="project" value="UniProtKB-UniRule"/>
</dbReference>
<dbReference type="GO" id="GO:0004827">
    <property type="term" value="F:proline-tRNA ligase activity"/>
    <property type="evidence" value="ECO:0007669"/>
    <property type="project" value="UniProtKB-UniRule"/>
</dbReference>
<dbReference type="GO" id="GO:0006433">
    <property type="term" value="P:prolyl-tRNA aminoacylation"/>
    <property type="evidence" value="ECO:0007669"/>
    <property type="project" value="UniProtKB-UniRule"/>
</dbReference>
<dbReference type="CDD" id="cd04334">
    <property type="entry name" value="ProRS-INS"/>
    <property type="match status" value="1"/>
</dbReference>
<dbReference type="CDD" id="cd00861">
    <property type="entry name" value="ProRS_anticodon_short"/>
    <property type="match status" value="1"/>
</dbReference>
<dbReference type="CDD" id="cd00779">
    <property type="entry name" value="ProRS_core_prok"/>
    <property type="match status" value="1"/>
</dbReference>
<dbReference type="FunFam" id="3.30.930.10:FF:000012">
    <property type="entry name" value="Proline--tRNA ligase"/>
    <property type="match status" value="1"/>
</dbReference>
<dbReference type="FunFam" id="3.30.930.10:FF:000097">
    <property type="entry name" value="Proline--tRNA ligase"/>
    <property type="match status" value="1"/>
</dbReference>
<dbReference type="FunFam" id="3.40.50.800:FF:000006">
    <property type="entry name" value="Proline--tRNA ligase"/>
    <property type="match status" value="1"/>
</dbReference>
<dbReference type="FunFam" id="3.90.960.10:FF:000001">
    <property type="entry name" value="Proline--tRNA ligase"/>
    <property type="match status" value="1"/>
</dbReference>
<dbReference type="Gene3D" id="3.40.50.800">
    <property type="entry name" value="Anticodon-binding domain"/>
    <property type="match status" value="1"/>
</dbReference>
<dbReference type="Gene3D" id="3.30.930.10">
    <property type="entry name" value="Bira Bifunctional Protein, Domain 2"/>
    <property type="match status" value="2"/>
</dbReference>
<dbReference type="Gene3D" id="3.90.960.10">
    <property type="entry name" value="YbaK/aminoacyl-tRNA synthetase-associated domain"/>
    <property type="match status" value="1"/>
</dbReference>
<dbReference type="HAMAP" id="MF_01569">
    <property type="entry name" value="Pro_tRNA_synth_type1"/>
    <property type="match status" value="1"/>
</dbReference>
<dbReference type="InterPro" id="IPR002314">
    <property type="entry name" value="aa-tRNA-synt_IIb"/>
</dbReference>
<dbReference type="InterPro" id="IPR006195">
    <property type="entry name" value="aa-tRNA-synth_II"/>
</dbReference>
<dbReference type="InterPro" id="IPR045864">
    <property type="entry name" value="aa-tRNA-synth_II/BPL/LPL"/>
</dbReference>
<dbReference type="InterPro" id="IPR004154">
    <property type="entry name" value="Anticodon-bd"/>
</dbReference>
<dbReference type="InterPro" id="IPR036621">
    <property type="entry name" value="Anticodon-bd_dom_sf"/>
</dbReference>
<dbReference type="InterPro" id="IPR002316">
    <property type="entry name" value="Pro-tRNA-ligase_IIa"/>
</dbReference>
<dbReference type="InterPro" id="IPR004500">
    <property type="entry name" value="Pro-tRNA-synth_IIa_bac-type"/>
</dbReference>
<dbReference type="InterPro" id="IPR023717">
    <property type="entry name" value="Pro-tRNA-Synthase_IIa_type1"/>
</dbReference>
<dbReference type="InterPro" id="IPR050062">
    <property type="entry name" value="Pro-tRNA_synthetase"/>
</dbReference>
<dbReference type="InterPro" id="IPR044140">
    <property type="entry name" value="ProRS_anticodon_short"/>
</dbReference>
<dbReference type="InterPro" id="IPR033730">
    <property type="entry name" value="ProRS_core_prok"/>
</dbReference>
<dbReference type="InterPro" id="IPR036754">
    <property type="entry name" value="YbaK/aa-tRNA-synt-asso_dom_sf"/>
</dbReference>
<dbReference type="InterPro" id="IPR007214">
    <property type="entry name" value="YbaK/aa-tRNA-synth-assoc-dom"/>
</dbReference>
<dbReference type="NCBIfam" id="NF006625">
    <property type="entry name" value="PRK09194.1"/>
    <property type="match status" value="1"/>
</dbReference>
<dbReference type="NCBIfam" id="TIGR00409">
    <property type="entry name" value="proS_fam_II"/>
    <property type="match status" value="1"/>
</dbReference>
<dbReference type="PANTHER" id="PTHR42753">
    <property type="entry name" value="MITOCHONDRIAL RIBOSOME PROTEIN L39/PROLYL-TRNA LIGASE FAMILY MEMBER"/>
    <property type="match status" value="1"/>
</dbReference>
<dbReference type="PANTHER" id="PTHR42753:SF2">
    <property type="entry name" value="PROLINE--TRNA LIGASE"/>
    <property type="match status" value="1"/>
</dbReference>
<dbReference type="Pfam" id="PF03129">
    <property type="entry name" value="HGTP_anticodon"/>
    <property type="match status" value="1"/>
</dbReference>
<dbReference type="Pfam" id="PF00587">
    <property type="entry name" value="tRNA-synt_2b"/>
    <property type="match status" value="1"/>
</dbReference>
<dbReference type="Pfam" id="PF04073">
    <property type="entry name" value="tRNA_edit"/>
    <property type="match status" value="1"/>
</dbReference>
<dbReference type="PIRSF" id="PIRSF001535">
    <property type="entry name" value="ProRS_1"/>
    <property type="match status" value="1"/>
</dbReference>
<dbReference type="PRINTS" id="PR01046">
    <property type="entry name" value="TRNASYNTHPRO"/>
</dbReference>
<dbReference type="SUPFAM" id="SSF52954">
    <property type="entry name" value="Class II aaRS ABD-related"/>
    <property type="match status" value="1"/>
</dbReference>
<dbReference type="SUPFAM" id="SSF55681">
    <property type="entry name" value="Class II aaRS and biotin synthetases"/>
    <property type="match status" value="1"/>
</dbReference>
<dbReference type="SUPFAM" id="SSF55826">
    <property type="entry name" value="YbaK/ProRS associated domain"/>
    <property type="match status" value="1"/>
</dbReference>
<dbReference type="PROSITE" id="PS50862">
    <property type="entry name" value="AA_TRNA_LIGASE_II"/>
    <property type="match status" value="1"/>
</dbReference>
<keyword id="KW-0030">Aminoacyl-tRNA synthetase</keyword>
<keyword id="KW-0067">ATP-binding</keyword>
<keyword id="KW-0963">Cytoplasm</keyword>
<keyword id="KW-0436">Ligase</keyword>
<keyword id="KW-0547">Nucleotide-binding</keyword>
<keyword id="KW-0648">Protein biosynthesis</keyword>
<accession>B2JZ09</accession>
<evidence type="ECO:0000255" key="1">
    <source>
        <dbReference type="HAMAP-Rule" id="MF_01569"/>
    </source>
</evidence>
<reference key="1">
    <citation type="submission" date="2008-04" db="EMBL/GenBank/DDBJ databases">
        <title>Complete sequence of Yersinia pseudotuberculosis PB1/+.</title>
        <authorList>
            <person name="Copeland A."/>
            <person name="Lucas S."/>
            <person name="Lapidus A."/>
            <person name="Glavina del Rio T."/>
            <person name="Dalin E."/>
            <person name="Tice H."/>
            <person name="Bruce D."/>
            <person name="Goodwin L."/>
            <person name="Pitluck S."/>
            <person name="Munk A.C."/>
            <person name="Brettin T."/>
            <person name="Detter J.C."/>
            <person name="Han C."/>
            <person name="Tapia R."/>
            <person name="Schmutz J."/>
            <person name="Larimer F."/>
            <person name="Land M."/>
            <person name="Hauser L."/>
            <person name="Challacombe J.F."/>
            <person name="Green L."/>
            <person name="Lindler L.E."/>
            <person name="Nikolich M.P."/>
            <person name="Richardson P."/>
        </authorList>
    </citation>
    <scope>NUCLEOTIDE SEQUENCE [LARGE SCALE GENOMIC DNA]</scope>
    <source>
        <strain>PB1/+</strain>
    </source>
</reference>
<name>SYP_YERPB</name>
<sequence>MRTSQYLLSTQKETPADAEVISHQLMLRAGMIRKLASGLYTWLPTGVRVLKKVENIVREEMNNAGAIEVSMPVVQPADLWQESGRWEQYGPELLRFVDRGERPFVLGPTHEEVITDLIRGEINSYKQLPLNFFQIQTKFRDELRPRFGVMRAREFLMKDAYSFHTTQESLQETYDAMYTAYSKIFSRMDLNFRAVLADTGSIGGSASHEFQVLAESGEDDIVFSTGSDYAANIEFAEALAPTEPRAPATEELRIVDTPNAKTIAELVEQFKLPIEKTVKTLLVHAHEESGHKLVALLVRGDHDLNEIKAEKLPQVAKPLTFASEEEIRAAIGAGPGSLGPVNLSLPVIADRSVAVMSDFGAGANIDGKHYFGINWERDLALPLVADLRNVVEGDISPDGKGTLQIKRGIEVGHIFQLGTKYSEAMKATVQGEDGRNQVMTMGCYGIGVSRVVAAAIEQNHDDRGIIWPDAIAPFQVAILPMNMHKSFRVKELAEELYTTLRSHGIDVILDDRKERPGVMFADMELIGVPHNIVIGDRNLDSEEVEYKNRRVGEKQMIKTSEIVEFLLSQIKR</sequence>
<protein>
    <recommendedName>
        <fullName evidence="1">Proline--tRNA ligase</fullName>
        <ecNumber evidence="1">6.1.1.15</ecNumber>
    </recommendedName>
    <alternativeName>
        <fullName evidence="1">Prolyl-tRNA synthetase</fullName>
        <shortName evidence="1">ProRS</shortName>
    </alternativeName>
</protein>
<feature type="chain" id="PRO_1000199446" description="Proline--tRNA ligase">
    <location>
        <begin position="1"/>
        <end position="572"/>
    </location>
</feature>